<comment type="function">
    <text evidence="1">Catalyzes the formation of 5-methyl-uridine at position 1939 (m5U1939) in 23S rRNA.</text>
</comment>
<comment type="catalytic activity">
    <reaction evidence="1">
        <text>uridine(1939) in 23S rRNA + S-adenosyl-L-methionine = 5-methyluridine(1939) in 23S rRNA + S-adenosyl-L-homocysteine + H(+)</text>
        <dbReference type="Rhea" id="RHEA:42908"/>
        <dbReference type="Rhea" id="RHEA-COMP:10278"/>
        <dbReference type="Rhea" id="RHEA-COMP:10279"/>
        <dbReference type="ChEBI" id="CHEBI:15378"/>
        <dbReference type="ChEBI" id="CHEBI:57856"/>
        <dbReference type="ChEBI" id="CHEBI:59789"/>
        <dbReference type="ChEBI" id="CHEBI:65315"/>
        <dbReference type="ChEBI" id="CHEBI:74447"/>
        <dbReference type="EC" id="2.1.1.190"/>
    </reaction>
</comment>
<comment type="similarity">
    <text evidence="1">Belongs to the class I-like SAM-binding methyltransferase superfamily. RNA M5U methyltransferase family. RlmD subfamily.</text>
</comment>
<protein>
    <recommendedName>
        <fullName evidence="1">23S rRNA (uracil(1939)-C(5))-methyltransferase RlmD</fullName>
        <ecNumber evidence="1">2.1.1.190</ecNumber>
    </recommendedName>
    <alternativeName>
        <fullName evidence="1">23S rRNA(m5U1939)-methyltransferase</fullName>
    </alternativeName>
</protein>
<keyword id="KW-0004">4Fe-4S</keyword>
<keyword id="KW-0408">Iron</keyword>
<keyword id="KW-0411">Iron-sulfur</keyword>
<keyword id="KW-0479">Metal-binding</keyword>
<keyword id="KW-0489">Methyltransferase</keyword>
<keyword id="KW-1185">Reference proteome</keyword>
<keyword id="KW-0698">rRNA processing</keyword>
<keyword id="KW-0949">S-adenosyl-L-methionine</keyword>
<keyword id="KW-0808">Transferase</keyword>
<proteinExistence type="inferred from homology"/>
<name>RLMD_PSEPK</name>
<dbReference type="EC" id="2.1.1.190" evidence="1"/>
<dbReference type="EMBL" id="AE015451">
    <property type="protein sequence ID" value="AAN67276.1"/>
    <property type="molecule type" value="Genomic_DNA"/>
</dbReference>
<dbReference type="RefSeq" id="NP_743812.1">
    <property type="nucleotide sequence ID" value="NC_002947.4"/>
</dbReference>
<dbReference type="RefSeq" id="WP_010952714.1">
    <property type="nucleotide sequence ID" value="NZ_CP169744.1"/>
</dbReference>
<dbReference type="SMR" id="Q88MB9"/>
<dbReference type="STRING" id="160488.PP_1655"/>
<dbReference type="PaxDb" id="160488-PP_1655"/>
<dbReference type="GeneID" id="83681867"/>
<dbReference type="KEGG" id="ppu:PP_1655"/>
<dbReference type="PATRIC" id="fig|160488.4.peg.1747"/>
<dbReference type="eggNOG" id="COG2265">
    <property type="taxonomic scope" value="Bacteria"/>
</dbReference>
<dbReference type="HOGENOM" id="CLU_014689_8_2_6"/>
<dbReference type="OrthoDB" id="9804590at2"/>
<dbReference type="PhylomeDB" id="Q88MB9"/>
<dbReference type="BioCyc" id="PPUT160488:G1G01-1753-MONOMER"/>
<dbReference type="Proteomes" id="UP000000556">
    <property type="component" value="Chromosome"/>
</dbReference>
<dbReference type="GO" id="GO:0051539">
    <property type="term" value="F:4 iron, 4 sulfur cluster binding"/>
    <property type="evidence" value="ECO:0007669"/>
    <property type="project" value="UniProtKB-KW"/>
</dbReference>
<dbReference type="GO" id="GO:0005506">
    <property type="term" value="F:iron ion binding"/>
    <property type="evidence" value="ECO:0007669"/>
    <property type="project" value="UniProtKB-UniRule"/>
</dbReference>
<dbReference type="GO" id="GO:0003723">
    <property type="term" value="F:RNA binding"/>
    <property type="evidence" value="ECO:0007669"/>
    <property type="project" value="InterPro"/>
</dbReference>
<dbReference type="GO" id="GO:0070041">
    <property type="term" value="F:rRNA (uridine-C5-)-methyltransferase activity"/>
    <property type="evidence" value="ECO:0007669"/>
    <property type="project" value="UniProtKB-UniRule"/>
</dbReference>
<dbReference type="GO" id="GO:0070475">
    <property type="term" value="P:rRNA base methylation"/>
    <property type="evidence" value="ECO:0007669"/>
    <property type="project" value="TreeGrafter"/>
</dbReference>
<dbReference type="CDD" id="cd02440">
    <property type="entry name" value="AdoMet_MTases"/>
    <property type="match status" value="1"/>
</dbReference>
<dbReference type="FunFam" id="3.40.50.150:FF:000009">
    <property type="entry name" value="23S rRNA (Uracil(1939)-C(5))-methyltransferase RlmD"/>
    <property type="match status" value="1"/>
</dbReference>
<dbReference type="Gene3D" id="2.40.50.1070">
    <property type="match status" value="1"/>
</dbReference>
<dbReference type="Gene3D" id="2.40.50.140">
    <property type="entry name" value="Nucleic acid-binding proteins"/>
    <property type="match status" value="1"/>
</dbReference>
<dbReference type="Gene3D" id="3.40.50.150">
    <property type="entry name" value="Vaccinia Virus protein VP39"/>
    <property type="match status" value="1"/>
</dbReference>
<dbReference type="HAMAP" id="MF_01010">
    <property type="entry name" value="23SrRNA_methyltr_RlmD"/>
    <property type="match status" value="1"/>
</dbReference>
<dbReference type="InterPro" id="IPR001566">
    <property type="entry name" value="23S_rRNA_MeTrfase_RlmD"/>
</dbReference>
<dbReference type="InterPro" id="IPR030390">
    <property type="entry name" value="MeTrfase_TrmA_AS"/>
</dbReference>
<dbReference type="InterPro" id="IPR030391">
    <property type="entry name" value="MeTrfase_TrmA_CS"/>
</dbReference>
<dbReference type="InterPro" id="IPR012340">
    <property type="entry name" value="NA-bd_OB-fold"/>
</dbReference>
<dbReference type="InterPro" id="IPR029063">
    <property type="entry name" value="SAM-dependent_MTases_sf"/>
</dbReference>
<dbReference type="InterPro" id="IPR002792">
    <property type="entry name" value="TRAM_dom"/>
</dbReference>
<dbReference type="InterPro" id="IPR010280">
    <property type="entry name" value="U5_MeTrfase_fam"/>
</dbReference>
<dbReference type="NCBIfam" id="NF009639">
    <property type="entry name" value="PRK13168.1"/>
    <property type="match status" value="1"/>
</dbReference>
<dbReference type="NCBIfam" id="TIGR00479">
    <property type="entry name" value="rumA"/>
    <property type="match status" value="1"/>
</dbReference>
<dbReference type="PANTHER" id="PTHR11061:SF49">
    <property type="entry name" value="23S RRNA (URACIL(1939)-C(5))-METHYLTRANSFERASE RLMD"/>
    <property type="match status" value="1"/>
</dbReference>
<dbReference type="PANTHER" id="PTHR11061">
    <property type="entry name" value="RNA M5U METHYLTRANSFERASE"/>
    <property type="match status" value="1"/>
</dbReference>
<dbReference type="Pfam" id="PF01938">
    <property type="entry name" value="TRAM"/>
    <property type="match status" value="1"/>
</dbReference>
<dbReference type="Pfam" id="PF05958">
    <property type="entry name" value="tRNA_U5-meth_tr"/>
    <property type="match status" value="1"/>
</dbReference>
<dbReference type="SUPFAM" id="SSF50249">
    <property type="entry name" value="Nucleic acid-binding proteins"/>
    <property type="match status" value="1"/>
</dbReference>
<dbReference type="SUPFAM" id="SSF53335">
    <property type="entry name" value="S-adenosyl-L-methionine-dependent methyltransferases"/>
    <property type="match status" value="1"/>
</dbReference>
<dbReference type="PROSITE" id="PS51687">
    <property type="entry name" value="SAM_MT_RNA_M5U"/>
    <property type="match status" value="1"/>
</dbReference>
<dbReference type="PROSITE" id="PS50926">
    <property type="entry name" value="TRAM"/>
    <property type="match status" value="1"/>
</dbReference>
<dbReference type="PROSITE" id="PS01230">
    <property type="entry name" value="TRMA_1"/>
    <property type="match status" value="1"/>
</dbReference>
<dbReference type="PROSITE" id="PS01231">
    <property type="entry name" value="TRMA_2"/>
    <property type="match status" value="1"/>
</dbReference>
<reference key="1">
    <citation type="journal article" date="2002" name="Environ. Microbiol.">
        <title>Complete genome sequence and comparative analysis of the metabolically versatile Pseudomonas putida KT2440.</title>
        <authorList>
            <person name="Nelson K.E."/>
            <person name="Weinel C."/>
            <person name="Paulsen I.T."/>
            <person name="Dodson R.J."/>
            <person name="Hilbert H."/>
            <person name="Martins dos Santos V.A.P."/>
            <person name="Fouts D.E."/>
            <person name="Gill S.R."/>
            <person name="Pop M."/>
            <person name="Holmes M."/>
            <person name="Brinkac L.M."/>
            <person name="Beanan M.J."/>
            <person name="DeBoy R.T."/>
            <person name="Daugherty S.C."/>
            <person name="Kolonay J.F."/>
            <person name="Madupu R."/>
            <person name="Nelson W.C."/>
            <person name="White O."/>
            <person name="Peterson J.D."/>
            <person name="Khouri H.M."/>
            <person name="Hance I."/>
            <person name="Chris Lee P."/>
            <person name="Holtzapple E.K."/>
            <person name="Scanlan D."/>
            <person name="Tran K."/>
            <person name="Moazzez A."/>
            <person name="Utterback T.R."/>
            <person name="Rizzo M."/>
            <person name="Lee K."/>
            <person name="Kosack D."/>
            <person name="Moestl D."/>
            <person name="Wedler H."/>
            <person name="Lauber J."/>
            <person name="Stjepandic D."/>
            <person name="Hoheisel J."/>
            <person name="Straetz M."/>
            <person name="Heim S."/>
            <person name="Kiewitz C."/>
            <person name="Eisen J.A."/>
            <person name="Timmis K.N."/>
            <person name="Duesterhoeft A."/>
            <person name="Tuemmler B."/>
            <person name="Fraser C.M."/>
        </authorList>
    </citation>
    <scope>NUCLEOTIDE SEQUENCE [LARGE SCALE GENOMIC DNA]</scope>
    <source>
        <strain>ATCC 47054 / DSM 6125 / CFBP 8728 / NCIMB 11950 / KT2440</strain>
    </source>
</reference>
<gene>
    <name evidence="1" type="primary">rlmD</name>
    <name type="synonym">rumA</name>
    <name type="ordered locus">PP_1655</name>
</gene>
<evidence type="ECO:0000255" key="1">
    <source>
        <dbReference type="HAMAP-Rule" id="MF_01010"/>
    </source>
</evidence>
<evidence type="ECO:0000256" key="2">
    <source>
        <dbReference type="SAM" id="MobiDB-lite"/>
    </source>
</evidence>
<feature type="chain" id="PRO_0000161908" description="23S rRNA (uracil(1939)-C(5))-methyltransferase RlmD">
    <location>
        <begin position="1"/>
        <end position="452"/>
    </location>
</feature>
<feature type="domain" description="TRAM" evidence="1">
    <location>
        <begin position="22"/>
        <end position="80"/>
    </location>
</feature>
<feature type="region of interest" description="Disordered" evidence="2">
    <location>
        <begin position="1"/>
        <end position="25"/>
    </location>
</feature>
<feature type="active site" description="Nucleophile" evidence="1">
    <location>
        <position position="409"/>
    </location>
</feature>
<feature type="binding site" evidence="1">
    <location>
        <position position="93"/>
    </location>
    <ligand>
        <name>[4Fe-4S] cluster</name>
        <dbReference type="ChEBI" id="CHEBI:49883"/>
    </ligand>
</feature>
<feature type="binding site" evidence="1">
    <location>
        <position position="99"/>
    </location>
    <ligand>
        <name>[4Fe-4S] cluster</name>
        <dbReference type="ChEBI" id="CHEBI:49883"/>
    </ligand>
</feature>
<feature type="binding site" evidence="1">
    <location>
        <position position="102"/>
    </location>
    <ligand>
        <name>[4Fe-4S] cluster</name>
        <dbReference type="ChEBI" id="CHEBI:49883"/>
    </ligand>
</feature>
<feature type="binding site" evidence="1">
    <location>
        <position position="181"/>
    </location>
    <ligand>
        <name>[4Fe-4S] cluster</name>
        <dbReference type="ChEBI" id="CHEBI:49883"/>
    </ligand>
</feature>
<feature type="binding site" evidence="1">
    <location>
        <position position="285"/>
    </location>
    <ligand>
        <name>S-adenosyl-L-methionine</name>
        <dbReference type="ChEBI" id="CHEBI:59789"/>
    </ligand>
</feature>
<feature type="binding site" evidence="1">
    <location>
        <position position="314"/>
    </location>
    <ligand>
        <name>S-adenosyl-L-methionine</name>
        <dbReference type="ChEBI" id="CHEBI:59789"/>
    </ligand>
</feature>
<feature type="binding site" evidence="1">
    <location>
        <position position="319"/>
    </location>
    <ligand>
        <name>S-adenosyl-L-methionine</name>
        <dbReference type="ChEBI" id="CHEBI:59789"/>
    </ligand>
</feature>
<feature type="binding site" evidence="1">
    <location>
        <position position="335"/>
    </location>
    <ligand>
        <name>S-adenosyl-L-methionine</name>
        <dbReference type="ChEBI" id="CHEBI:59789"/>
    </ligand>
</feature>
<feature type="binding site" evidence="1">
    <location>
        <position position="362"/>
    </location>
    <ligand>
        <name>S-adenosyl-L-methionine</name>
        <dbReference type="ChEBI" id="CHEBI:59789"/>
    </ligand>
</feature>
<feature type="binding site" evidence="1">
    <location>
        <position position="383"/>
    </location>
    <ligand>
        <name>S-adenosyl-L-methionine</name>
        <dbReference type="ChEBI" id="CHEBI:59789"/>
    </ligand>
</feature>
<organism>
    <name type="scientific">Pseudomonas putida (strain ATCC 47054 / DSM 6125 / CFBP 8728 / NCIMB 11950 / KT2440)</name>
    <dbReference type="NCBI Taxonomy" id="160488"/>
    <lineage>
        <taxon>Bacteria</taxon>
        <taxon>Pseudomonadati</taxon>
        <taxon>Pseudomonadota</taxon>
        <taxon>Gammaproteobacteria</taxon>
        <taxon>Pseudomonadales</taxon>
        <taxon>Pseudomonadaceae</taxon>
        <taxon>Pseudomonas</taxon>
    </lineage>
</organism>
<accession>Q88MB9</accession>
<sequence>MSKKKSNSGLRFQPAGGNRTPQVPVGKKQRLDIERLAGDGRGIAFLDGRTWFVSGALAGEAVEARVLNARGKVVEARLERLLQAAPERREAPCRYYDRCGGCNLQHLPHEAQLALKQRTLAEQLQRVAGVQPEAWAAPLSGPEFGYRRRARVAVRWDVKARQLEVGFRAEASQDIIAIDDCAVLVQPLQSILRHLPTVLRSLSKPQALGHVELFSGTAEAVLVRHVAPLPAEDQARLQAFCEQANAQLWLQGEGEPAPVDPAAQLGFALAPWQLELAWRPGDFVQVNAQVNTAMIEQALAWLAPQADERVLDLFCGLGNFALPLARQAREVVAVEGVQAMVDRAAANARNNNVHNARFFQADLSQPLAGTGWAAEGFSAVLLDPPRDGAFEVVQGIARLKARRLVYVSCNPATLARDAQVLVGQGYRLKRAGILDMFPQTAHVEAMALFEAG</sequence>